<gene>
    <name evidence="1" type="primary">sucC</name>
    <name type="ordered locus">Spro_1269</name>
</gene>
<protein>
    <recommendedName>
        <fullName evidence="1">Succinate--CoA ligase [ADP-forming] subunit beta</fullName>
        <ecNumber evidence="1">6.2.1.5</ecNumber>
    </recommendedName>
    <alternativeName>
        <fullName evidence="1">Succinyl-CoA synthetase subunit beta</fullName>
        <shortName evidence="1">SCS-beta</shortName>
    </alternativeName>
</protein>
<proteinExistence type="inferred from homology"/>
<keyword id="KW-0067">ATP-binding</keyword>
<keyword id="KW-0436">Ligase</keyword>
<keyword id="KW-0460">Magnesium</keyword>
<keyword id="KW-0479">Metal-binding</keyword>
<keyword id="KW-0547">Nucleotide-binding</keyword>
<keyword id="KW-0816">Tricarboxylic acid cycle</keyword>
<comment type="function">
    <text evidence="1">Succinyl-CoA synthetase functions in the citric acid cycle (TCA), coupling the hydrolysis of succinyl-CoA to the synthesis of either ATP or GTP and thus represents the only step of substrate-level phosphorylation in the TCA. The beta subunit provides nucleotide specificity of the enzyme and binds the substrate succinate, while the binding sites for coenzyme A and phosphate are found in the alpha subunit.</text>
</comment>
<comment type="catalytic activity">
    <reaction evidence="1">
        <text>succinate + ATP + CoA = succinyl-CoA + ADP + phosphate</text>
        <dbReference type="Rhea" id="RHEA:17661"/>
        <dbReference type="ChEBI" id="CHEBI:30031"/>
        <dbReference type="ChEBI" id="CHEBI:30616"/>
        <dbReference type="ChEBI" id="CHEBI:43474"/>
        <dbReference type="ChEBI" id="CHEBI:57287"/>
        <dbReference type="ChEBI" id="CHEBI:57292"/>
        <dbReference type="ChEBI" id="CHEBI:456216"/>
        <dbReference type="EC" id="6.2.1.5"/>
    </reaction>
    <physiologicalReaction direction="right-to-left" evidence="1">
        <dbReference type="Rhea" id="RHEA:17663"/>
    </physiologicalReaction>
</comment>
<comment type="catalytic activity">
    <reaction evidence="1">
        <text>GTP + succinate + CoA = succinyl-CoA + GDP + phosphate</text>
        <dbReference type="Rhea" id="RHEA:22120"/>
        <dbReference type="ChEBI" id="CHEBI:30031"/>
        <dbReference type="ChEBI" id="CHEBI:37565"/>
        <dbReference type="ChEBI" id="CHEBI:43474"/>
        <dbReference type="ChEBI" id="CHEBI:57287"/>
        <dbReference type="ChEBI" id="CHEBI:57292"/>
        <dbReference type="ChEBI" id="CHEBI:58189"/>
    </reaction>
    <physiologicalReaction direction="right-to-left" evidence="1">
        <dbReference type="Rhea" id="RHEA:22122"/>
    </physiologicalReaction>
</comment>
<comment type="cofactor">
    <cofactor evidence="1">
        <name>Mg(2+)</name>
        <dbReference type="ChEBI" id="CHEBI:18420"/>
    </cofactor>
    <text evidence="1">Binds 1 Mg(2+) ion per subunit.</text>
</comment>
<comment type="pathway">
    <text evidence="1">Carbohydrate metabolism; tricarboxylic acid cycle; succinate from succinyl-CoA (ligase route): step 1/1.</text>
</comment>
<comment type="subunit">
    <text evidence="1">Heterotetramer of two alpha and two beta subunits.</text>
</comment>
<comment type="similarity">
    <text evidence="1">Belongs to the succinate/malate CoA ligase beta subunit family.</text>
</comment>
<organism>
    <name type="scientific">Serratia proteamaculans (strain 568)</name>
    <dbReference type="NCBI Taxonomy" id="399741"/>
    <lineage>
        <taxon>Bacteria</taxon>
        <taxon>Pseudomonadati</taxon>
        <taxon>Pseudomonadota</taxon>
        <taxon>Gammaproteobacteria</taxon>
        <taxon>Enterobacterales</taxon>
        <taxon>Yersiniaceae</taxon>
        <taxon>Serratia</taxon>
    </lineage>
</organism>
<accession>A8GB83</accession>
<dbReference type="EC" id="6.2.1.5" evidence="1"/>
<dbReference type="EMBL" id="CP000826">
    <property type="protein sequence ID" value="ABV40373.1"/>
    <property type="molecule type" value="Genomic_DNA"/>
</dbReference>
<dbReference type="SMR" id="A8GB83"/>
<dbReference type="STRING" id="399741.Spro_1269"/>
<dbReference type="KEGG" id="spe:Spro_1269"/>
<dbReference type="eggNOG" id="COG0045">
    <property type="taxonomic scope" value="Bacteria"/>
</dbReference>
<dbReference type="HOGENOM" id="CLU_037430_0_2_6"/>
<dbReference type="OrthoDB" id="9802602at2"/>
<dbReference type="UniPathway" id="UPA00223">
    <property type="reaction ID" value="UER00999"/>
</dbReference>
<dbReference type="GO" id="GO:0005829">
    <property type="term" value="C:cytosol"/>
    <property type="evidence" value="ECO:0007669"/>
    <property type="project" value="TreeGrafter"/>
</dbReference>
<dbReference type="GO" id="GO:0042709">
    <property type="term" value="C:succinate-CoA ligase complex"/>
    <property type="evidence" value="ECO:0007669"/>
    <property type="project" value="TreeGrafter"/>
</dbReference>
<dbReference type="GO" id="GO:0005524">
    <property type="term" value="F:ATP binding"/>
    <property type="evidence" value="ECO:0007669"/>
    <property type="project" value="UniProtKB-UniRule"/>
</dbReference>
<dbReference type="GO" id="GO:0000287">
    <property type="term" value="F:magnesium ion binding"/>
    <property type="evidence" value="ECO:0007669"/>
    <property type="project" value="UniProtKB-UniRule"/>
</dbReference>
<dbReference type="GO" id="GO:0004775">
    <property type="term" value="F:succinate-CoA ligase (ADP-forming) activity"/>
    <property type="evidence" value="ECO:0007669"/>
    <property type="project" value="UniProtKB-UniRule"/>
</dbReference>
<dbReference type="GO" id="GO:0004776">
    <property type="term" value="F:succinate-CoA ligase (GDP-forming) activity"/>
    <property type="evidence" value="ECO:0007669"/>
    <property type="project" value="RHEA"/>
</dbReference>
<dbReference type="GO" id="GO:0006104">
    <property type="term" value="P:succinyl-CoA metabolic process"/>
    <property type="evidence" value="ECO:0007669"/>
    <property type="project" value="TreeGrafter"/>
</dbReference>
<dbReference type="GO" id="GO:0006099">
    <property type="term" value="P:tricarboxylic acid cycle"/>
    <property type="evidence" value="ECO:0007669"/>
    <property type="project" value="UniProtKB-UniRule"/>
</dbReference>
<dbReference type="FunFam" id="3.30.1490.20:FF:000002">
    <property type="entry name" value="Succinate--CoA ligase [ADP-forming] subunit beta"/>
    <property type="match status" value="1"/>
</dbReference>
<dbReference type="FunFam" id="3.30.470.20:FF:000002">
    <property type="entry name" value="Succinate--CoA ligase [ADP-forming] subunit beta"/>
    <property type="match status" value="1"/>
</dbReference>
<dbReference type="FunFam" id="3.40.50.261:FF:000001">
    <property type="entry name" value="Succinate--CoA ligase [ADP-forming] subunit beta"/>
    <property type="match status" value="1"/>
</dbReference>
<dbReference type="Gene3D" id="3.30.1490.20">
    <property type="entry name" value="ATP-grasp fold, A domain"/>
    <property type="match status" value="1"/>
</dbReference>
<dbReference type="Gene3D" id="3.30.470.20">
    <property type="entry name" value="ATP-grasp fold, B domain"/>
    <property type="match status" value="1"/>
</dbReference>
<dbReference type="Gene3D" id="3.40.50.261">
    <property type="entry name" value="Succinyl-CoA synthetase domains"/>
    <property type="match status" value="1"/>
</dbReference>
<dbReference type="HAMAP" id="MF_00558">
    <property type="entry name" value="Succ_CoA_beta"/>
    <property type="match status" value="1"/>
</dbReference>
<dbReference type="InterPro" id="IPR011761">
    <property type="entry name" value="ATP-grasp"/>
</dbReference>
<dbReference type="InterPro" id="IPR013650">
    <property type="entry name" value="ATP-grasp_succ-CoA_synth-type"/>
</dbReference>
<dbReference type="InterPro" id="IPR013815">
    <property type="entry name" value="ATP_grasp_subdomain_1"/>
</dbReference>
<dbReference type="InterPro" id="IPR017866">
    <property type="entry name" value="Succ-CoA_synthase_bsu_CS"/>
</dbReference>
<dbReference type="InterPro" id="IPR005811">
    <property type="entry name" value="SUCC_ACL_C"/>
</dbReference>
<dbReference type="InterPro" id="IPR005809">
    <property type="entry name" value="Succ_CoA_ligase-like_bsu"/>
</dbReference>
<dbReference type="InterPro" id="IPR016102">
    <property type="entry name" value="Succinyl-CoA_synth-like"/>
</dbReference>
<dbReference type="NCBIfam" id="NF001913">
    <property type="entry name" value="PRK00696.1"/>
    <property type="match status" value="1"/>
</dbReference>
<dbReference type="NCBIfam" id="TIGR01016">
    <property type="entry name" value="sucCoAbeta"/>
    <property type="match status" value="1"/>
</dbReference>
<dbReference type="PANTHER" id="PTHR11815:SF10">
    <property type="entry name" value="SUCCINATE--COA LIGASE [GDP-FORMING] SUBUNIT BETA, MITOCHONDRIAL"/>
    <property type="match status" value="1"/>
</dbReference>
<dbReference type="PANTHER" id="PTHR11815">
    <property type="entry name" value="SUCCINYL-COA SYNTHETASE BETA CHAIN"/>
    <property type="match status" value="1"/>
</dbReference>
<dbReference type="Pfam" id="PF08442">
    <property type="entry name" value="ATP-grasp_2"/>
    <property type="match status" value="1"/>
</dbReference>
<dbReference type="Pfam" id="PF00549">
    <property type="entry name" value="Ligase_CoA"/>
    <property type="match status" value="1"/>
</dbReference>
<dbReference type="PIRSF" id="PIRSF001554">
    <property type="entry name" value="SucCS_beta"/>
    <property type="match status" value="1"/>
</dbReference>
<dbReference type="SUPFAM" id="SSF56059">
    <property type="entry name" value="Glutathione synthetase ATP-binding domain-like"/>
    <property type="match status" value="1"/>
</dbReference>
<dbReference type="SUPFAM" id="SSF52210">
    <property type="entry name" value="Succinyl-CoA synthetase domains"/>
    <property type="match status" value="1"/>
</dbReference>
<dbReference type="PROSITE" id="PS50975">
    <property type="entry name" value="ATP_GRASP"/>
    <property type="match status" value="1"/>
</dbReference>
<dbReference type="PROSITE" id="PS01217">
    <property type="entry name" value="SUCCINYL_COA_LIG_3"/>
    <property type="match status" value="1"/>
</dbReference>
<sequence>MNLHEYQAKQLFARYGMPAPTGYACTTPREAEEAASKIGSGPWVVKCQVHAGGRGKAGGVKVVNSKEDIRAFAEAWLGKRLVTYQTDALGQPVHQILVEAATDIDKELYLGAVVDRASRRVVFMASTEGGVEIEKVAEETPELIHKMTIDPLAGPQPYQGRELAFKLGLTGKQVGQFAKIFMGLATLFLERDLAMVEINPLVVTKQGDLICLDGKLGADGNALFRQPELREMRDLSQEDERESRAAQWELNYVALDGNIGCMVNGAGLAMGTMDIVKLHGGEPANFLDVGGGATKERVTEAFKIILSDDKVKAVLVNIFGGIVRCDLIADGIIGAVAEVGVNVPVVVRLEGNNAELGAKKLADSGLNIIAATSLTDAAQQVVAAVGSK</sequence>
<name>SUCC_SERP5</name>
<evidence type="ECO:0000255" key="1">
    <source>
        <dbReference type="HAMAP-Rule" id="MF_00558"/>
    </source>
</evidence>
<feature type="chain" id="PRO_1000082216" description="Succinate--CoA ligase [ADP-forming] subunit beta">
    <location>
        <begin position="1"/>
        <end position="388"/>
    </location>
</feature>
<feature type="domain" description="ATP-grasp" evidence="1">
    <location>
        <begin position="9"/>
        <end position="244"/>
    </location>
</feature>
<feature type="binding site" evidence="1">
    <location>
        <position position="46"/>
    </location>
    <ligand>
        <name>ATP</name>
        <dbReference type="ChEBI" id="CHEBI:30616"/>
    </ligand>
</feature>
<feature type="binding site" evidence="1">
    <location>
        <begin position="53"/>
        <end position="55"/>
    </location>
    <ligand>
        <name>ATP</name>
        <dbReference type="ChEBI" id="CHEBI:30616"/>
    </ligand>
</feature>
<feature type="binding site" evidence="1">
    <location>
        <position position="99"/>
    </location>
    <ligand>
        <name>ATP</name>
        <dbReference type="ChEBI" id="CHEBI:30616"/>
    </ligand>
</feature>
<feature type="binding site" evidence="1">
    <location>
        <position position="102"/>
    </location>
    <ligand>
        <name>ATP</name>
        <dbReference type="ChEBI" id="CHEBI:30616"/>
    </ligand>
</feature>
<feature type="binding site" evidence="1">
    <location>
        <position position="107"/>
    </location>
    <ligand>
        <name>ATP</name>
        <dbReference type="ChEBI" id="CHEBI:30616"/>
    </ligand>
</feature>
<feature type="binding site" evidence="1">
    <location>
        <position position="199"/>
    </location>
    <ligand>
        <name>Mg(2+)</name>
        <dbReference type="ChEBI" id="CHEBI:18420"/>
    </ligand>
</feature>
<feature type="binding site" evidence="1">
    <location>
        <position position="213"/>
    </location>
    <ligand>
        <name>Mg(2+)</name>
        <dbReference type="ChEBI" id="CHEBI:18420"/>
    </ligand>
</feature>
<feature type="binding site" evidence="1">
    <location>
        <position position="264"/>
    </location>
    <ligand>
        <name>substrate</name>
        <note>ligand shared with subunit alpha</note>
    </ligand>
</feature>
<feature type="binding site" evidence="1">
    <location>
        <begin position="321"/>
        <end position="323"/>
    </location>
    <ligand>
        <name>substrate</name>
        <note>ligand shared with subunit alpha</note>
    </ligand>
</feature>
<reference key="1">
    <citation type="submission" date="2007-09" db="EMBL/GenBank/DDBJ databases">
        <title>Complete sequence of chromosome of Serratia proteamaculans 568.</title>
        <authorList>
            <consortium name="US DOE Joint Genome Institute"/>
            <person name="Copeland A."/>
            <person name="Lucas S."/>
            <person name="Lapidus A."/>
            <person name="Barry K."/>
            <person name="Glavina del Rio T."/>
            <person name="Dalin E."/>
            <person name="Tice H."/>
            <person name="Pitluck S."/>
            <person name="Chain P."/>
            <person name="Malfatti S."/>
            <person name="Shin M."/>
            <person name="Vergez L."/>
            <person name="Schmutz J."/>
            <person name="Larimer F."/>
            <person name="Land M."/>
            <person name="Hauser L."/>
            <person name="Kyrpides N."/>
            <person name="Kim E."/>
            <person name="Taghavi S."/>
            <person name="Newman L."/>
            <person name="Vangronsveld J."/>
            <person name="van der Lelie D."/>
            <person name="Richardson P."/>
        </authorList>
    </citation>
    <scope>NUCLEOTIDE SEQUENCE [LARGE SCALE GENOMIC DNA]</scope>
    <source>
        <strain>568</strain>
    </source>
</reference>